<evidence type="ECO:0000255" key="1">
    <source>
        <dbReference type="HAMAP-Rule" id="MF_00465"/>
    </source>
</evidence>
<evidence type="ECO:0000305" key="2"/>
<gene>
    <name evidence="1" type="primary">speD</name>
    <name type="ordered locus">Hhal_2078</name>
</gene>
<feature type="chain" id="PRO_0000364383" description="S-adenosylmethionine decarboxylase beta chain" evidence="1">
    <location>
        <begin position="1"/>
        <end position="116"/>
    </location>
</feature>
<feature type="chain" id="PRO_0000364384" description="S-adenosylmethionine decarboxylase alpha chain" evidence="1">
    <location>
        <begin position="117"/>
        <end position="272"/>
    </location>
</feature>
<feature type="active site" description="Schiff-base intermediate with substrate; via pyruvic acid" evidence="1">
    <location>
        <position position="117"/>
    </location>
</feature>
<feature type="active site" description="Proton acceptor; for processing activity" evidence="1">
    <location>
        <position position="122"/>
    </location>
</feature>
<feature type="active site" description="Proton donor; for catalytic activity" evidence="1">
    <location>
        <position position="145"/>
    </location>
</feature>
<feature type="site" description="Cleavage (non-hydrolytic); by autolysis" evidence="1">
    <location>
        <begin position="116"/>
        <end position="117"/>
    </location>
</feature>
<feature type="modified residue" description="Pyruvic acid (Ser); by autocatalysis" evidence="1">
    <location>
        <position position="117"/>
    </location>
</feature>
<protein>
    <recommendedName>
        <fullName evidence="1">S-adenosylmethionine decarboxylase proenzyme</fullName>
        <shortName evidence="1">AdoMetDC</shortName>
        <shortName evidence="1">SAMDC</shortName>
        <ecNumber evidence="1">4.1.1.50</ecNumber>
    </recommendedName>
    <component>
        <recommendedName>
            <fullName evidence="1">S-adenosylmethionine decarboxylase beta chain</fullName>
        </recommendedName>
    </component>
    <component>
        <recommendedName>
            <fullName evidence="1">S-adenosylmethionine decarboxylase alpha chain</fullName>
        </recommendedName>
    </component>
</protein>
<proteinExistence type="inferred from homology"/>
<reference key="1">
    <citation type="submission" date="2006-12" db="EMBL/GenBank/DDBJ databases">
        <title>Complete sequence of Halorhodospira halophila SL1.</title>
        <authorList>
            <consortium name="US DOE Joint Genome Institute"/>
            <person name="Copeland A."/>
            <person name="Lucas S."/>
            <person name="Lapidus A."/>
            <person name="Barry K."/>
            <person name="Detter J.C."/>
            <person name="Glavina del Rio T."/>
            <person name="Hammon N."/>
            <person name="Israni S."/>
            <person name="Dalin E."/>
            <person name="Tice H."/>
            <person name="Pitluck S."/>
            <person name="Saunders E."/>
            <person name="Brettin T."/>
            <person name="Bruce D."/>
            <person name="Han C."/>
            <person name="Tapia R."/>
            <person name="Schmutz J."/>
            <person name="Larimer F."/>
            <person name="Land M."/>
            <person name="Hauser L."/>
            <person name="Kyrpides N."/>
            <person name="Mikhailova N."/>
            <person name="Hoff W."/>
            <person name="Richardson P."/>
        </authorList>
    </citation>
    <scope>NUCLEOTIDE SEQUENCE [LARGE SCALE GENOMIC DNA]</scope>
    <source>
        <strain>DSM 244 / SL1</strain>
    </source>
</reference>
<dbReference type="EC" id="4.1.1.50" evidence="1"/>
<dbReference type="EMBL" id="CP000544">
    <property type="protein sequence ID" value="ABM62842.1"/>
    <property type="status" value="ALT_INIT"/>
    <property type="molecule type" value="Genomic_DNA"/>
</dbReference>
<dbReference type="RefSeq" id="WP_041595177.1">
    <property type="nucleotide sequence ID" value="NC_008789.1"/>
</dbReference>
<dbReference type="SMR" id="A1WYT0"/>
<dbReference type="STRING" id="349124.Hhal_2078"/>
<dbReference type="KEGG" id="hha:Hhal_2078"/>
<dbReference type="eggNOG" id="COG1586">
    <property type="taxonomic scope" value="Bacteria"/>
</dbReference>
<dbReference type="HOGENOM" id="CLU_092007_0_0_6"/>
<dbReference type="OrthoDB" id="5290709at2"/>
<dbReference type="UniPathway" id="UPA00331">
    <property type="reaction ID" value="UER00451"/>
</dbReference>
<dbReference type="Proteomes" id="UP000000647">
    <property type="component" value="Chromosome"/>
</dbReference>
<dbReference type="GO" id="GO:0005829">
    <property type="term" value="C:cytosol"/>
    <property type="evidence" value="ECO:0007669"/>
    <property type="project" value="TreeGrafter"/>
</dbReference>
<dbReference type="GO" id="GO:0004014">
    <property type="term" value="F:adenosylmethionine decarboxylase activity"/>
    <property type="evidence" value="ECO:0007669"/>
    <property type="project" value="UniProtKB-UniRule"/>
</dbReference>
<dbReference type="GO" id="GO:0008295">
    <property type="term" value="P:spermidine biosynthetic process"/>
    <property type="evidence" value="ECO:0007669"/>
    <property type="project" value="UniProtKB-UniRule"/>
</dbReference>
<dbReference type="FunFam" id="3.60.90.10:FF:000001">
    <property type="entry name" value="S-adenosylmethionine decarboxylase proenzyme"/>
    <property type="match status" value="1"/>
</dbReference>
<dbReference type="Gene3D" id="3.60.90.10">
    <property type="entry name" value="S-adenosylmethionine decarboxylase"/>
    <property type="match status" value="1"/>
</dbReference>
<dbReference type="HAMAP" id="MF_00465">
    <property type="entry name" value="AdoMetDC_2"/>
    <property type="match status" value="1"/>
</dbReference>
<dbReference type="InterPro" id="IPR003826">
    <property type="entry name" value="AdoMetDC_fam_prok"/>
</dbReference>
<dbReference type="InterPro" id="IPR009165">
    <property type="entry name" value="S-AdoMet_deCO2ase_bac"/>
</dbReference>
<dbReference type="InterPro" id="IPR016067">
    <property type="entry name" value="S-AdoMet_deCO2ase_core"/>
</dbReference>
<dbReference type="NCBIfam" id="TIGR03331">
    <property type="entry name" value="SAM_DCase_Eco"/>
    <property type="match status" value="1"/>
</dbReference>
<dbReference type="PANTHER" id="PTHR33866">
    <property type="entry name" value="S-ADENOSYLMETHIONINE DECARBOXYLASE PROENZYME"/>
    <property type="match status" value="1"/>
</dbReference>
<dbReference type="PANTHER" id="PTHR33866:SF1">
    <property type="entry name" value="S-ADENOSYLMETHIONINE DECARBOXYLASE PROENZYME"/>
    <property type="match status" value="1"/>
</dbReference>
<dbReference type="Pfam" id="PF02675">
    <property type="entry name" value="AdoMet_dc"/>
    <property type="match status" value="1"/>
</dbReference>
<dbReference type="PIRSF" id="PIRSF001356">
    <property type="entry name" value="SAM_decarboxylas"/>
    <property type="match status" value="1"/>
</dbReference>
<dbReference type="SUPFAM" id="SSF56276">
    <property type="entry name" value="S-adenosylmethionine decarboxylase"/>
    <property type="match status" value="1"/>
</dbReference>
<organism>
    <name type="scientific">Halorhodospira halophila (strain DSM 244 / SL1)</name>
    <name type="common">Ectothiorhodospira halophila (strain DSM 244 / SL1)</name>
    <dbReference type="NCBI Taxonomy" id="349124"/>
    <lineage>
        <taxon>Bacteria</taxon>
        <taxon>Pseudomonadati</taxon>
        <taxon>Pseudomonadota</taxon>
        <taxon>Gammaproteobacteria</taxon>
        <taxon>Chromatiales</taxon>
        <taxon>Ectothiorhodospiraceae</taxon>
        <taxon>Halorhodospira</taxon>
    </lineage>
</organism>
<keyword id="KW-0068">Autocatalytic cleavage</keyword>
<keyword id="KW-0210">Decarboxylase</keyword>
<keyword id="KW-0456">Lyase</keyword>
<keyword id="KW-0620">Polyamine biosynthesis</keyword>
<keyword id="KW-0670">Pyruvate</keyword>
<keyword id="KW-1185">Reference proteome</keyword>
<keyword id="KW-0949">S-adenosyl-L-methionine</keyword>
<keyword id="KW-0704">Schiff base</keyword>
<keyword id="KW-0745">Spermidine biosynthesis</keyword>
<keyword id="KW-0865">Zymogen</keyword>
<name>SPED_HALHL</name>
<sequence length="272" mass="31239">MVDYTRIRLHGFNNLTKSLSFNIYDVCYAKTEAQRRAYIEYIDEEYNAERLTEILTNVAEIIGANVLNVARQDYDPQGASVTILISEGPVSPEEAEESAEARPGPLPDDVVAHLDKSHITVHTYPEMHPDKGVSTFRADIDVSTCGVISPLTALNYLIHSFDSDIVTMDYRVRGFTRDVEGHKHFIDHEINSIQNYLSEDTKERYQTLDVNVYQENIFHTKMILREFDLDNYLFGESSADLDEEEANTIRRHLRREMMEIFAGRNLPANQEV</sequence>
<comment type="function">
    <text evidence="1">Catalyzes the decarboxylation of S-adenosylmethionine to S-adenosylmethioninamine (dcAdoMet), the propylamine donor required for the synthesis of the polyamines spermine and spermidine from the diamine putrescine.</text>
</comment>
<comment type="catalytic activity">
    <reaction evidence="1">
        <text>S-adenosyl-L-methionine + H(+) = S-adenosyl 3-(methylsulfanyl)propylamine + CO2</text>
        <dbReference type="Rhea" id="RHEA:15981"/>
        <dbReference type="ChEBI" id="CHEBI:15378"/>
        <dbReference type="ChEBI" id="CHEBI:16526"/>
        <dbReference type="ChEBI" id="CHEBI:57443"/>
        <dbReference type="ChEBI" id="CHEBI:59789"/>
        <dbReference type="EC" id="4.1.1.50"/>
    </reaction>
</comment>
<comment type="cofactor">
    <cofactor evidence="1">
        <name>pyruvate</name>
        <dbReference type="ChEBI" id="CHEBI:15361"/>
    </cofactor>
    <text evidence="1">Binds 1 pyruvoyl group covalently per subunit.</text>
</comment>
<comment type="pathway">
    <text evidence="1">Amine and polyamine biosynthesis; S-adenosylmethioninamine biosynthesis; S-adenosylmethioninamine from S-adenosyl-L-methionine: step 1/1.</text>
</comment>
<comment type="subunit">
    <text evidence="1">Heterooctamer of four alpha and four beta chains arranged as a tetramer of alpha/beta heterodimers.</text>
</comment>
<comment type="PTM">
    <text evidence="1">Is synthesized initially as an inactive proenzyme. Formation of the active enzyme involves a self-maturation process in which the active site pyruvoyl group is generated from an internal serine residue via an autocatalytic post-translational modification. Two non-identical subunits are generated from the proenzyme in this reaction, and the pyruvate is formed at the N-terminus of the alpha chain, which is derived from the carboxyl end of the proenzyme. The post-translation cleavage follows an unusual pathway, termed non-hydrolytic serinolysis, in which the side chain hydroxyl group of the serine supplies its oxygen atom to form the C-terminus of the beta chain, while the remainder of the serine residue undergoes an oxidative deamination to produce ammonia and the pyruvoyl group blocking the N-terminus of the alpha chain.</text>
</comment>
<comment type="similarity">
    <text evidence="1">Belongs to the prokaryotic AdoMetDC family. Type 2 subfamily.</text>
</comment>
<comment type="sequence caution" evidence="2">
    <conflict type="erroneous initiation">
        <sequence resource="EMBL-CDS" id="ABM62842"/>
    </conflict>
</comment>
<accession>A1WYT0</accession>